<dbReference type="EC" id="4.3.2.10" evidence="1"/>
<dbReference type="EMBL" id="CP000854">
    <property type="protein sequence ID" value="ACC40851.1"/>
    <property type="molecule type" value="Genomic_DNA"/>
</dbReference>
<dbReference type="RefSeq" id="WP_012394148.1">
    <property type="nucleotide sequence ID" value="NC_010612.1"/>
</dbReference>
<dbReference type="SMR" id="B2HQA8"/>
<dbReference type="STRING" id="216594.MMAR_2401"/>
<dbReference type="KEGG" id="mmi:MMAR_2401"/>
<dbReference type="eggNOG" id="COG0107">
    <property type="taxonomic scope" value="Bacteria"/>
</dbReference>
<dbReference type="HOGENOM" id="CLU_048577_4_0_11"/>
<dbReference type="OrthoDB" id="9781903at2"/>
<dbReference type="UniPathway" id="UPA00031">
    <property type="reaction ID" value="UER00010"/>
</dbReference>
<dbReference type="Proteomes" id="UP000001190">
    <property type="component" value="Chromosome"/>
</dbReference>
<dbReference type="GO" id="GO:0005737">
    <property type="term" value="C:cytoplasm"/>
    <property type="evidence" value="ECO:0007669"/>
    <property type="project" value="UniProtKB-SubCell"/>
</dbReference>
<dbReference type="GO" id="GO:0000107">
    <property type="term" value="F:imidazoleglycerol-phosphate synthase activity"/>
    <property type="evidence" value="ECO:0007669"/>
    <property type="project" value="UniProtKB-UniRule"/>
</dbReference>
<dbReference type="GO" id="GO:0016829">
    <property type="term" value="F:lyase activity"/>
    <property type="evidence" value="ECO:0007669"/>
    <property type="project" value="UniProtKB-KW"/>
</dbReference>
<dbReference type="GO" id="GO:0000105">
    <property type="term" value="P:L-histidine biosynthetic process"/>
    <property type="evidence" value="ECO:0007669"/>
    <property type="project" value="UniProtKB-UniRule"/>
</dbReference>
<dbReference type="CDD" id="cd04731">
    <property type="entry name" value="HisF"/>
    <property type="match status" value="1"/>
</dbReference>
<dbReference type="FunFam" id="3.20.20.70:FF:000006">
    <property type="entry name" value="Imidazole glycerol phosphate synthase subunit HisF"/>
    <property type="match status" value="1"/>
</dbReference>
<dbReference type="Gene3D" id="3.20.20.70">
    <property type="entry name" value="Aldolase class I"/>
    <property type="match status" value="1"/>
</dbReference>
<dbReference type="HAMAP" id="MF_01013">
    <property type="entry name" value="HisF"/>
    <property type="match status" value="1"/>
</dbReference>
<dbReference type="InterPro" id="IPR013785">
    <property type="entry name" value="Aldolase_TIM"/>
</dbReference>
<dbReference type="InterPro" id="IPR006062">
    <property type="entry name" value="His_biosynth"/>
</dbReference>
<dbReference type="InterPro" id="IPR004651">
    <property type="entry name" value="HisF"/>
</dbReference>
<dbReference type="InterPro" id="IPR050064">
    <property type="entry name" value="IGPS_HisA/HisF"/>
</dbReference>
<dbReference type="InterPro" id="IPR011060">
    <property type="entry name" value="RibuloseP-bd_barrel"/>
</dbReference>
<dbReference type="NCBIfam" id="TIGR00735">
    <property type="entry name" value="hisF"/>
    <property type="match status" value="1"/>
</dbReference>
<dbReference type="PANTHER" id="PTHR21235:SF2">
    <property type="entry name" value="IMIDAZOLE GLYCEROL PHOSPHATE SYNTHASE HISHF"/>
    <property type="match status" value="1"/>
</dbReference>
<dbReference type="PANTHER" id="PTHR21235">
    <property type="entry name" value="IMIDAZOLE GLYCEROL PHOSPHATE SYNTHASE SUBUNIT HISF/H IGP SYNTHASE SUBUNIT HISF/H"/>
    <property type="match status" value="1"/>
</dbReference>
<dbReference type="Pfam" id="PF00977">
    <property type="entry name" value="His_biosynth"/>
    <property type="match status" value="1"/>
</dbReference>
<dbReference type="SUPFAM" id="SSF51366">
    <property type="entry name" value="Ribulose-phoshate binding barrel"/>
    <property type="match status" value="1"/>
</dbReference>
<reference key="1">
    <citation type="journal article" date="2008" name="Genome Res.">
        <title>Insights from the complete genome sequence of Mycobacterium marinum on the evolution of Mycobacterium tuberculosis.</title>
        <authorList>
            <person name="Stinear T.P."/>
            <person name="Seemann T."/>
            <person name="Harrison P.F."/>
            <person name="Jenkin G.A."/>
            <person name="Davies J.K."/>
            <person name="Johnson P.D."/>
            <person name="Abdellah Z."/>
            <person name="Arrowsmith C."/>
            <person name="Chillingworth T."/>
            <person name="Churcher C."/>
            <person name="Clarke K."/>
            <person name="Cronin A."/>
            <person name="Davis P."/>
            <person name="Goodhead I."/>
            <person name="Holroyd N."/>
            <person name="Jagels K."/>
            <person name="Lord A."/>
            <person name="Moule S."/>
            <person name="Mungall K."/>
            <person name="Norbertczak H."/>
            <person name="Quail M.A."/>
            <person name="Rabbinowitsch E."/>
            <person name="Walker D."/>
            <person name="White B."/>
            <person name="Whitehead S."/>
            <person name="Small P.L."/>
            <person name="Brosch R."/>
            <person name="Ramakrishnan L."/>
            <person name="Fischbach M.A."/>
            <person name="Parkhill J."/>
            <person name="Cole S.T."/>
        </authorList>
    </citation>
    <scope>NUCLEOTIDE SEQUENCE [LARGE SCALE GENOMIC DNA]</scope>
    <source>
        <strain>ATCC BAA-535 / M</strain>
    </source>
</reference>
<organism>
    <name type="scientific">Mycobacterium marinum (strain ATCC BAA-535 / M)</name>
    <dbReference type="NCBI Taxonomy" id="216594"/>
    <lineage>
        <taxon>Bacteria</taxon>
        <taxon>Bacillati</taxon>
        <taxon>Actinomycetota</taxon>
        <taxon>Actinomycetes</taxon>
        <taxon>Mycobacteriales</taxon>
        <taxon>Mycobacteriaceae</taxon>
        <taxon>Mycobacterium</taxon>
        <taxon>Mycobacterium ulcerans group</taxon>
    </lineage>
</organism>
<feature type="chain" id="PRO_1000190583" description="Imidazole glycerol phosphate synthase subunit HisF">
    <location>
        <begin position="1"/>
        <end position="261"/>
    </location>
</feature>
<feature type="active site" evidence="1">
    <location>
        <position position="16"/>
    </location>
</feature>
<feature type="active site" evidence="1">
    <location>
        <position position="135"/>
    </location>
</feature>
<sequence>MYTDTGLAVRVIPCLDVDAGRVVKGVNFENLRDAGDPVELAAAYDAEGADELTFLDVTASSSGRATMLEVVRHTAEQVFIPLTVGGGVRTVADVDLLLRAGADKVSVNTAAIARPDLLADMATQFGSQCIVLSVDARKVPVGPAPTPSGWEVTTHGGRRGTGIDAVEWAARGADLGVGEILLNSMDADGTKAGFDLAMLRAVRAAVTVPVIASGGAGNVDHFAPAVAAGADAVLAASVFHFRELTIGQVKAAMAAEGITVR</sequence>
<evidence type="ECO:0000255" key="1">
    <source>
        <dbReference type="HAMAP-Rule" id="MF_01013"/>
    </source>
</evidence>
<name>HIS6_MYCMM</name>
<keyword id="KW-0028">Amino-acid biosynthesis</keyword>
<keyword id="KW-0963">Cytoplasm</keyword>
<keyword id="KW-0368">Histidine biosynthesis</keyword>
<keyword id="KW-0456">Lyase</keyword>
<keyword id="KW-1185">Reference proteome</keyword>
<accession>B2HQA8</accession>
<proteinExistence type="inferred from homology"/>
<protein>
    <recommendedName>
        <fullName evidence="1">Imidazole glycerol phosphate synthase subunit HisF</fullName>
        <ecNumber evidence="1">4.3.2.10</ecNumber>
    </recommendedName>
    <alternativeName>
        <fullName evidence="1">IGP synthase cyclase subunit</fullName>
    </alternativeName>
    <alternativeName>
        <fullName evidence="1">IGP synthase subunit HisF</fullName>
    </alternativeName>
    <alternativeName>
        <fullName evidence="1">ImGP synthase subunit HisF</fullName>
        <shortName evidence="1">IGPS subunit HisF</shortName>
    </alternativeName>
</protein>
<gene>
    <name evidence="1" type="primary">hisF</name>
    <name type="ordered locus">MMAR_2401</name>
</gene>
<comment type="function">
    <text evidence="1">IGPS catalyzes the conversion of PRFAR and glutamine to IGP, AICAR and glutamate. The HisF subunit catalyzes the cyclization activity that produces IGP and AICAR from PRFAR using the ammonia provided by the HisH subunit.</text>
</comment>
<comment type="catalytic activity">
    <reaction evidence="1">
        <text>5-[(5-phospho-1-deoxy-D-ribulos-1-ylimino)methylamino]-1-(5-phospho-beta-D-ribosyl)imidazole-4-carboxamide + L-glutamine = D-erythro-1-(imidazol-4-yl)glycerol 3-phosphate + 5-amino-1-(5-phospho-beta-D-ribosyl)imidazole-4-carboxamide + L-glutamate + H(+)</text>
        <dbReference type="Rhea" id="RHEA:24793"/>
        <dbReference type="ChEBI" id="CHEBI:15378"/>
        <dbReference type="ChEBI" id="CHEBI:29985"/>
        <dbReference type="ChEBI" id="CHEBI:58278"/>
        <dbReference type="ChEBI" id="CHEBI:58359"/>
        <dbReference type="ChEBI" id="CHEBI:58475"/>
        <dbReference type="ChEBI" id="CHEBI:58525"/>
        <dbReference type="EC" id="4.3.2.10"/>
    </reaction>
</comment>
<comment type="pathway">
    <text evidence="1">Amino-acid biosynthesis; L-histidine biosynthesis; L-histidine from 5-phospho-alpha-D-ribose 1-diphosphate: step 5/9.</text>
</comment>
<comment type="subunit">
    <text evidence="1">Heterodimer of HisH and HisF.</text>
</comment>
<comment type="subcellular location">
    <subcellularLocation>
        <location evidence="1">Cytoplasm</location>
    </subcellularLocation>
</comment>
<comment type="similarity">
    <text evidence="1">Belongs to the HisA/HisF family.</text>
</comment>